<organism>
    <name type="scientific">Staphylococcus aureus (strain N315)</name>
    <dbReference type="NCBI Taxonomy" id="158879"/>
    <lineage>
        <taxon>Bacteria</taxon>
        <taxon>Bacillati</taxon>
        <taxon>Bacillota</taxon>
        <taxon>Bacilli</taxon>
        <taxon>Bacillales</taxon>
        <taxon>Staphylococcaceae</taxon>
        <taxon>Staphylococcus</taxon>
    </lineage>
</organism>
<keyword id="KW-0687">Ribonucleoprotein</keyword>
<keyword id="KW-0689">Ribosomal protein</keyword>
<comment type="similarity">
    <text evidence="1">Belongs to the universal ribosomal protein uL29 family.</text>
</comment>
<sequence>MKAKEIRDLTTSEIEEQIKSSKEELFNLRFQLATGQLEETARIRTVRKTIARLKTVAREREIEQSKANQ</sequence>
<proteinExistence type="evidence at protein level"/>
<gene>
    <name evidence="1" type="primary">rpmC</name>
    <name type="ordered locus">SA2039</name>
</gene>
<evidence type="ECO:0000255" key="1">
    <source>
        <dbReference type="HAMAP-Rule" id="MF_00374"/>
    </source>
</evidence>
<evidence type="ECO:0000305" key="2"/>
<dbReference type="EMBL" id="BA000018">
    <property type="protein sequence ID" value="BAB43334.1"/>
    <property type="molecule type" value="Genomic_DNA"/>
</dbReference>
<dbReference type="PIR" id="E90021">
    <property type="entry name" value="E90021"/>
</dbReference>
<dbReference type="RefSeq" id="WP_000644737.1">
    <property type="nucleotide sequence ID" value="NC_002745.2"/>
</dbReference>
<dbReference type="EMDB" id="EMD-12333"/>
<dbReference type="SMR" id="P66173"/>
<dbReference type="EnsemblBacteria" id="BAB43334">
    <property type="protein sequence ID" value="BAB43334"/>
    <property type="gene ID" value="BAB43334"/>
</dbReference>
<dbReference type="GeneID" id="98346554"/>
<dbReference type="KEGG" id="sau:SA2039"/>
<dbReference type="HOGENOM" id="CLU_158491_5_2_9"/>
<dbReference type="GO" id="GO:0022625">
    <property type="term" value="C:cytosolic large ribosomal subunit"/>
    <property type="evidence" value="ECO:0007669"/>
    <property type="project" value="TreeGrafter"/>
</dbReference>
<dbReference type="GO" id="GO:0003735">
    <property type="term" value="F:structural constituent of ribosome"/>
    <property type="evidence" value="ECO:0007669"/>
    <property type="project" value="InterPro"/>
</dbReference>
<dbReference type="GO" id="GO:0006412">
    <property type="term" value="P:translation"/>
    <property type="evidence" value="ECO:0007669"/>
    <property type="project" value="UniProtKB-UniRule"/>
</dbReference>
<dbReference type="CDD" id="cd00427">
    <property type="entry name" value="Ribosomal_L29_HIP"/>
    <property type="match status" value="1"/>
</dbReference>
<dbReference type="FunFam" id="1.10.287.310:FF:000001">
    <property type="entry name" value="50S ribosomal protein L29"/>
    <property type="match status" value="1"/>
</dbReference>
<dbReference type="Gene3D" id="1.10.287.310">
    <property type="match status" value="1"/>
</dbReference>
<dbReference type="HAMAP" id="MF_00374">
    <property type="entry name" value="Ribosomal_uL29"/>
    <property type="match status" value="1"/>
</dbReference>
<dbReference type="InterPro" id="IPR050063">
    <property type="entry name" value="Ribosomal_protein_uL29"/>
</dbReference>
<dbReference type="InterPro" id="IPR001854">
    <property type="entry name" value="Ribosomal_uL29"/>
</dbReference>
<dbReference type="InterPro" id="IPR036049">
    <property type="entry name" value="Ribosomal_uL29_sf"/>
</dbReference>
<dbReference type="NCBIfam" id="TIGR00012">
    <property type="entry name" value="L29"/>
    <property type="match status" value="1"/>
</dbReference>
<dbReference type="PANTHER" id="PTHR10916">
    <property type="entry name" value="60S RIBOSOMAL PROTEIN L35/50S RIBOSOMAL PROTEIN L29"/>
    <property type="match status" value="1"/>
</dbReference>
<dbReference type="PANTHER" id="PTHR10916:SF0">
    <property type="entry name" value="LARGE RIBOSOMAL SUBUNIT PROTEIN UL29C"/>
    <property type="match status" value="1"/>
</dbReference>
<dbReference type="Pfam" id="PF00831">
    <property type="entry name" value="Ribosomal_L29"/>
    <property type="match status" value="1"/>
</dbReference>
<dbReference type="SUPFAM" id="SSF46561">
    <property type="entry name" value="Ribosomal protein L29 (L29p)"/>
    <property type="match status" value="1"/>
</dbReference>
<accession>P66173</accession>
<accession>Q99S29</accession>
<protein>
    <recommendedName>
        <fullName evidence="1">Large ribosomal subunit protein uL29</fullName>
    </recommendedName>
    <alternativeName>
        <fullName evidence="2">50S ribosomal protein L29</fullName>
    </alternativeName>
</protein>
<feature type="chain" id="PRO_0000130457" description="Large ribosomal subunit protein uL29">
    <location>
        <begin position="1"/>
        <end position="69"/>
    </location>
</feature>
<name>RL29_STAAN</name>
<reference key="1">
    <citation type="journal article" date="2001" name="Lancet">
        <title>Whole genome sequencing of meticillin-resistant Staphylococcus aureus.</title>
        <authorList>
            <person name="Kuroda M."/>
            <person name="Ohta T."/>
            <person name="Uchiyama I."/>
            <person name="Baba T."/>
            <person name="Yuzawa H."/>
            <person name="Kobayashi I."/>
            <person name="Cui L."/>
            <person name="Oguchi A."/>
            <person name="Aoki K."/>
            <person name="Nagai Y."/>
            <person name="Lian J.-Q."/>
            <person name="Ito T."/>
            <person name="Kanamori M."/>
            <person name="Matsumaru H."/>
            <person name="Maruyama A."/>
            <person name="Murakami H."/>
            <person name="Hosoyama A."/>
            <person name="Mizutani-Ui Y."/>
            <person name="Takahashi N.K."/>
            <person name="Sawano T."/>
            <person name="Inoue R."/>
            <person name="Kaito C."/>
            <person name="Sekimizu K."/>
            <person name="Hirakawa H."/>
            <person name="Kuhara S."/>
            <person name="Goto S."/>
            <person name="Yabuzaki J."/>
            <person name="Kanehisa M."/>
            <person name="Yamashita A."/>
            <person name="Oshima K."/>
            <person name="Furuya K."/>
            <person name="Yoshino C."/>
            <person name="Shiba T."/>
            <person name="Hattori M."/>
            <person name="Ogasawara N."/>
            <person name="Hayashi H."/>
            <person name="Hiramatsu K."/>
        </authorList>
    </citation>
    <scope>NUCLEOTIDE SEQUENCE [LARGE SCALE GENOMIC DNA]</scope>
    <source>
        <strain>N315</strain>
    </source>
</reference>
<reference key="2">
    <citation type="submission" date="2007-10" db="UniProtKB">
        <title>Shotgun proteomic analysis of total and membrane protein extracts of S. aureus strain N315.</title>
        <authorList>
            <person name="Vaezzadeh A.R."/>
            <person name="Deshusses J."/>
            <person name="Lescuyer P."/>
            <person name="Hochstrasser D.F."/>
        </authorList>
    </citation>
    <scope>IDENTIFICATION BY MASS SPECTROMETRY [LARGE SCALE ANALYSIS]</scope>
    <source>
        <strain>N315</strain>
    </source>
</reference>